<gene>
    <name evidence="1" type="primary">fau-1</name>
    <name type="ordered locus">OE_4688F</name>
</gene>
<sequence length="471" mass="50002">MTRVRVRGIYATALTQLLRNAGLDVVAASPPIRARFPDADLGAAEPHADIRMTPDRQGVGITAHGDDHARAVRAVVADLPRDTFVWPDPVPRGAVFDAAVDHTVGGGAILDLGDDREAYLPFGAVDDHVTDGDTLRVAIRDPAPPWHDDRPTATSTITVSGALASLDRGVDALVAGAATDRAELARATELLDPDIPDNWGVYWEYDGADASLDARGTALDTLAARADRLEATLADADGGDTPGLVAAPDTTLWAWFGRETRCALDDHRRTVAATMPGHHRIKAGSDAASDAVDFAEALGASVDEFPFGAVTDQFGPSVGASIEIQHGKPDGALISLGRGEVTDRSAENARITVEREMTGGGTYDALGVAREAGDTATTRFTEGNWWYPTVYRSEDGERKGTYLNVCTPVEVFPDAVRYVDLHVDVIKHADGAVEIVDREELQDCVADGLVSEELAEKALSVAERVQSAVAE</sequence>
<protein>
    <recommendedName>
        <fullName evidence="1">Probable ribonuclease FAU-1</fullName>
        <ecNumber evidence="1">3.1.26.-</ecNumber>
    </recommendedName>
    <alternativeName>
        <fullName evidence="1">RNA-binding protein FAU-1</fullName>
    </alternativeName>
</protein>
<reference key="1">
    <citation type="journal article" date="2008" name="Genomics">
        <title>Evolution in the laboratory: the genome of Halobacterium salinarum strain R1 compared to that of strain NRC-1.</title>
        <authorList>
            <person name="Pfeiffer F."/>
            <person name="Schuster S.C."/>
            <person name="Broicher A."/>
            <person name="Falb M."/>
            <person name="Palm P."/>
            <person name="Rodewald K."/>
            <person name="Ruepp A."/>
            <person name="Soppa J."/>
            <person name="Tittor J."/>
            <person name="Oesterhelt D."/>
        </authorList>
    </citation>
    <scope>NUCLEOTIDE SEQUENCE [LARGE SCALE GENOMIC DNA]</scope>
    <source>
        <strain>ATCC 29341 / DSM 671 / R1</strain>
    </source>
</reference>
<evidence type="ECO:0000255" key="1">
    <source>
        <dbReference type="HAMAP-Rule" id="MF_01910"/>
    </source>
</evidence>
<name>FAU1_HALS3</name>
<proteinExistence type="inferred from homology"/>
<feature type="chain" id="PRO_0000334196" description="Probable ribonuclease FAU-1">
    <location>
        <begin position="1"/>
        <end position="471"/>
    </location>
</feature>
<feature type="domain" description="S1 motif" evidence="1">
    <location>
        <begin position="93"/>
        <end position="139"/>
    </location>
</feature>
<comment type="function">
    <text evidence="1">Probable RNase involved in rRNA stability through maturation and/or degradation of precursor rRNAs. Binds to RNA in loop regions with AU-rich sequences.</text>
</comment>
<comment type="similarity">
    <text evidence="1">Belongs to the FAU-1 family.</text>
</comment>
<accession>B0R8A2</accession>
<dbReference type="EC" id="3.1.26.-" evidence="1"/>
<dbReference type="EMBL" id="AM774415">
    <property type="protein sequence ID" value="CAP14971.1"/>
    <property type="molecule type" value="Genomic_DNA"/>
</dbReference>
<dbReference type="RefSeq" id="WP_010903965.1">
    <property type="nucleotide sequence ID" value="NC_010364.1"/>
</dbReference>
<dbReference type="SMR" id="B0R8A2"/>
<dbReference type="EnsemblBacteria" id="CAP14971">
    <property type="protein sequence ID" value="CAP14971"/>
    <property type="gene ID" value="OE_4688F"/>
</dbReference>
<dbReference type="KEGG" id="hsl:OE_4688F"/>
<dbReference type="HOGENOM" id="CLU_044303_0_0_2"/>
<dbReference type="PhylomeDB" id="B0R8A2"/>
<dbReference type="Proteomes" id="UP000001321">
    <property type="component" value="Chromosome"/>
</dbReference>
<dbReference type="GO" id="GO:0035925">
    <property type="term" value="F:mRNA 3'-UTR AU-rich region binding"/>
    <property type="evidence" value="ECO:0007669"/>
    <property type="project" value="UniProtKB-UniRule"/>
</dbReference>
<dbReference type="GO" id="GO:0016891">
    <property type="term" value="F:RNA endonuclease activity, producing 5'-phosphomonoesters"/>
    <property type="evidence" value="ECO:0007669"/>
    <property type="project" value="UniProtKB-UniRule"/>
</dbReference>
<dbReference type="GO" id="GO:0006364">
    <property type="term" value="P:rRNA processing"/>
    <property type="evidence" value="ECO:0007669"/>
    <property type="project" value="UniProtKB-UniRule"/>
</dbReference>
<dbReference type="Gene3D" id="2.40.380.10">
    <property type="entry name" value="FomD-like"/>
    <property type="match status" value="1"/>
</dbReference>
<dbReference type="HAMAP" id="MF_01910">
    <property type="entry name" value="RNA_binding_AU_1"/>
    <property type="match status" value="1"/>
</dbReference>
<dbReference type="InterPro" id="IPR007295">
    <property type="entry name" value="DUF402"/>
</dbReference>
<dbReference type="InterPro" id="IPR035930">
    <property type="entry name" value="FomD-like_sf"/>
</dbReference>
<dbReference type="InterPro" id="IPR050212">
    <property type="entry name" value="Ntdp-like"/>
</dbReference>
<dbReference type="InterPro" id="IPR016730">
    <property type="entry name" value="RNA-bd_FAU-1"/>
</dbReference>
<dbReference type="PANTHER" id="PTHR39159">
    <property type="match status" value="1"/>
</dbReference>
<dbReference type="PANTHER" id="PTHR39159:SF1">
    <property type="entry name" value="UPF0374 PROTEIN YGAC"/>
    <property type="match status" value="1"/>
</dbReference>
<dbReference type="Pfam" id="PF04167">
    <property type="entry name" value="DUF402"/>
    <property type="match status" value="1"/>
</dbReference>
<dbReference type="PIRSF" id="PIRSF018644">
    <property type="entry name" value="RNA-binding_FAU-1"/>
    <property type="match status" value="1"/>
</dbReference>
<dbReference type="SUPFAM" id="SSF159234">
    <property type="entry name" value="FomD-like"/>
    <property type="match status" value="1"/>
</dbReference>
<organism>
    <name type="scientific">Halobacterium salinarum (strain ATCC 29341 / DSM 671 / R1)</name>
    <dbReference type="NCBI Taxonomy" id="478009"/>
    <lineage>
        <taxon>Archaea</taxon>
        <taxon>Methanobacteriati</taxon>
        <taxon>Methanobacteriota</taxon>
        <taxon>Stenosarchaea group</taxon>
        <taxon>Halobacteria</taxon>
        <taxon>Halobacteriales</taxon>
        <taxon>Halobacteriaceae</taxon>
        <taxon>Halobacterium</taxon>
        <taxon>Halobacterium salinarum NRC-34001</taxon>
    </lineage>
</organism>
<keyword id="KW-0255">Endonuclease</keyword>
<keyword id="KW-0378">Hydrolase</keyword>
<keyword id="KW-0540">Nuclease</keyword>
<keyword id="KW-0694">RNA-binding</keyword>
<keyword id="KW-0698">rRNA processing</keyword>